<feature type="chain" id="PRO_0000298264" description="Protein Syd">
    <location>
        <begin position="1"/>
        <end position="216"/>
    </location>
</feature>
<accession>A1RLP5</accession>
<name>SYDP_SHESW</name>
<keyword id="KW-0997">Cell inner membrane</keyword>
<keyword id="KW-1003">Cell membrane</keyword>
<keyword id="KW-0472">Membrane</keyword>
<sequence length="216" mass="24607">MSCLPALDKFLQNYHQAYLTTLGELPRYYPQGEPSVCIQGEFFADSDKPIAWQPVKRDEVGSFTNVEHALDLPLWPDIHLFYGQYFSAPLLFDSKWGTGELLQVWNDDDFKCLQQNVIGHLMMKKKLKQPPTWFIGLLDEGDKMLTINNSDGSVWIEIPGEEQSEQLSTSLTAFIEALSPRIAPPVKHEELPMPALDHPGIFANIKRMWQNLFGKG</sequence>
<reference key="1">
    <citation type="submission" date="2006-12" db="EMBL/GenBank/DDBJ databases">
        <title>Complete sequence of Shewanella sp. W3-18-1.</title>
        <authorList>
            <consortium name="US DOE Joint Genome Institute"/>
            <person name="Copeland A."/>
            <person name="Lucas S."/>
            <person name="Lapidus A."/>
            <person name="Barry K."/>
            <person name="Detter J.C."/>
            <person name="Glavina del Rio T."/>
            <person name="Hammon N."/>
            <person name="Israni S."/>
            <person name="Dalin E."/>
            <person name="Tice H."/>
            <person name="Pitluck S."/>
            <person name="Chain P."/>
            <person name="Malfatti S."/>
            <person name="Shin M."/>
            <person name="Vergez L."/>
            <person name="Schmutz J."/>
            <person name="Larimer F."/>
            <person name="Land M."/>
            <person name="Hauser L."/>
            <person name="Kyrpides N."/>
            <person name="Lykidis A."/>
            <person name="Tiedje J."/>
            <person name="Richardson P."/>
        </authorList>
    </citation>
    <scope>NUCLEOTIDE SEQUENCE [LARGE SCALE GENOMIC DNA]</scope>
    <source>
        <strain>W3-18-1</strain>
    </source>
</reference>
<proteinExistence type="inferred from homology"/>
<evidence type="ECO:0000255" key="1">
    <source>
        <dbReference type="HAMAP-Rule" id="MF_01104"/>
    </source>
</evidence>
<dbReference type="EMBL" id="CP000503">
    <property type="protein sequence ID" value="ABM25590.1"/>
    <property type="molecule type" value="Genomic_DNA"/>
</dbReference>
<dbReference type="RefSeq" id="WP_011790046.1">
    <property type="nucleotide sequence ID" value="NC_008750.1"/>
</dbReference>
<dbReference type="SMR" id="A1RLP5"/>
<dbReference type="GeneID" id="67442850"/>
<dbReference type="KEGG" id="shw:Sputw3181_2773"/>
<dbReference type="HOGENOM" id="CLU_121866_0_0_6"/>
<dbReference type="Proteomes" id="UP000002597">
    <property type="component" value="Chromosome"/>
</dbReference>
<dbReference type="GO" id="GO:0009898">
    <property type="term" value="C:cytoplasmic side of plasma membrane"/>
    <property type="evidence" value="ECO:0007669"/>
    <property type="project" value="InterPro"/>
</dbReference>
<dbReference type="CDD" id="cd16323">
    <property type="entry name" value="Syd"/>
    <property type="match status" value="1"/>
</dbReference>
<dbReference type="Gene3D" id="3.40.1580.20">
    <property type="entry name" value="Syd protein"/>
    <property type="match status" value="1"/>
</dbReference>
<dbReference type="HAMAP" id="MF_01104">
    <property type="entry name" value="Syd"/>
    <property type="match status" value="1"/>
</dbReference>
<dbReference type="InterPro" id="IPR009948">
    <property type="entry name" value="Syd"/>
</dbReference>
<dbReference type="InterPro" id="IPR038228">
    <property type="entry name" value="Syd_sf"/>
</dbReference>
<dbReference type="NCBIfam" id="NF003439">
    <property type="entry name" value="PRK04968.1"/>
    <property type="match status" value="1"/>
</dbReference>
<dbReference type="Pfam" id="PF07348">
    <property type="entry name" value="Syd"/>
    <property type="match status" value="1"/>
</dbReference>
<protein>
    <recommendedName>
        <fullName evidence="1">Protein Syd</fullName>
    </recommendedName>
</protein>
<comment type="function">
    <text evidence="1">Interacts with the SecY protein in vivo. May bind preferentially to an uncomplexed state of SecY, thus functioning either as a chelating agent for excess SecY in the cell or as a regulatory factor that negatively controls the translocase function.</text>
</comment>
<comment type="subcellular location">
    <subcellularLocation>
        <location evidence="1">Cell inner membrane</location>
        <topology evidence="1">Peripheral membrane protein</topology>
        <orientation evidence="1">Cytoplasmic side</orientation>
    </subcellularLocation>
    <text evidence="1">Loosely associated with the cytoplasmic side of the inner membrane, probably via SecY.</text>
</comment>
<comment type="similarity">
    <text evidence="1">Belongs to the Syd family.</text>
</comment>
<organism>
    <name type="scientific">Shewanella sp. (strain W3-18-1)</name>
    <dbReference type="NCBI Taxonomy" id="351745"/>
    <lineage>
        <taxon>Bacteria</taxon>
        <taxon>Pseudomonadati</taxon>
        <taxon>Pseudomonadota</taxon>
        <taxon>Gammaproteobacteria</taxon>
        <taxon>Alteromonadales</taxon>
        <taxon>Shewanellaceae</taxon>
        <taxon>Shewanella</taxon>
    </lineage>
</organism>
<gene>
    <name evidence="1" type="primary">syd</name>
    <name type="ordered locus">Sputw3181_2773</name>
</gene>